<organism>
    <name type="scientific">Methylobacillus glycogenes</name>
    <dbReference type="NCBI Taxonomy" id="406"/>
    <lineage>
        <taxon>Bacteria</taxon>
        <taxon>Pseudomonadati</taxon>
        <taxon>Pseudomonadota</taxon>
        <taxon>Betaproteobacteria</taxon>
        <taxon>Nitrosomonadales</taxon>
        <taxon>Methylophilaceae</taxon>
        <taxon>Methylobacillus</taxon>
    </lineage>
</organism>
<proteinExistence type="inferred from homology"/>
<gene>
    <name type="primary">hom</name>
</gene>
<dbReference type="EC" id="1.1.1.3" evidence="3"/>
<dbReference type="EMBL" id="D14070">
    <property type="protein sequence ID" value="BAA40414.1"/>
    <property type="molecule type" value="Genomic_DNA"/>
</dbReference>
<dbReference type="SMR" id="P37143"/>
<dbReference type="UniPathway" id="UPA00050">
    <property type="reaction ID" value="UER00063"/>
</dbReference>
<dbReference type="UniPathway" id="UPA00051">
    <property type="reaction ID" value="UER00465"/>
</dbReference>
<dbReference type="GO" id="GO:0004412">
    <property type="term" value="F:homoserine dehydrogenase activity"/>
    <property type="evidence" value="ECO:0000250"/>
    <property type="project" value="UniProtKB"/>
</dbReference>
<dbReference type="GO" id="GO:0046872">
    <property type="term" value="F:metal ion binding"/>
    <property type="evidence" value="ECO:0007669"/>
    <property type="project" value="UniProtKB-KW"/>
</dbReference>
<dbReference type="GO" id="GO:0070403">
    <property type="term" value="F:NAD+ binding"/>
    <property type="evidence" value="ECO:0000250"/>
    <property type="project" value="UniProtKB"/>
</dbReference>
<dbReference type="GO" id="GO:0009086">
    <property type="term" value="P:methionine biosynthetic process"/>
    <property type="evidence" value="ECO:0000250"/>
    <property type="project" value="UniProtKB"/>
</dbReference>
<dbReference type="GO" id="GO:0009088">
    <property type="term" value="P:threonine biosynthetic process"/>
    <property type="evidence" value="ECO:0000250"/>
    <property type="project" value="UniProtKB"/>
</dbReference>
<dbReference type="Gene3D" id="3.30.70.260">
    <property type="match status" value="1"/>
</dbReference>
<dbReference type="Gene3D" id="3.30.360.10">
    <property type="entry name" value="Dihydrodipicolinate Reductase, domain 2"/>
    <property type="match status" value="1"/>
</dbReference>
<dbReference type="Gene3D" id="3.40.50.720">
    <property type="entry name" value="NAD(P)-binding Rossmann-like Domain"/>
    <property type="match status" value="1"/>
</dbReference>
<dbReference type="InterPro" id="IPR001342">
    <property type="entry name" value="HDH_cat"/>
</dbReference>
<dbReference type="InterPro" id="IPR036291">
    <property type="entry name" value="NAD(P)-bd_dom_sf"/>
</dbReference>
<dbReference type="NCBIfam" id="NF004976">
    <property type="entry name" value="PRK06349.1"/>
    <property type="match status" value="1"/>
</dbReference>
<dbReference type="PANTHER" id="PTHR43331">
    <property type="entry name" value="HOMOSERINE DEHYDROGENASE"/>
    <property type="match status" value="1"/>
</dbReference>
<dbReference type="PANTHER" id="PTHR43331:SF1">
    <property type="entry name" value="HOMOSERINE DEHYDROGENASE"/>
    <property type="match status" value="1"/>
</dbReference>
<dbReference type="Pfam" id="PF00742">
    <property type="entry name" value="Homoserine_dh"/>
    <property type="match status" value="1"/>
</dbReference>
<dbReference type="SUPFAM" id="SSF55347">
    <property type="entry name" value="Glyceraldehyde-3-phosphate dehydrogenase-like, C-terminal domain"/>
    <property type="match status" value="1"/>
</dbReference>
<dbReference type="SUPFAM" id="SSF51735">
    <property type="entry name" value="NAD(P)-binding Rossmann-fold domains"/>
    <property type="match status" value="1"/>
</dbReference>
<comment type="function">
    <text evidence="3">Catalyzes the conversion of L-aspartate-beta-semialdehyde (L-Asa) to L-homoserine (L-Hse), the third step in the biosynthesis of threonine and methionine from aspartate.</text>
</comment>
<comment type="catalytic activity">
    <reaction evidence="3">
        <text>L-homoserine + NADP(+) = L-aspartate 4-semialdehyde + NADPH + H(+)</text>
        <dbReference type="Rhea" id="RHEA:15761"/>
        <dbReference type="ChEBI" id="CHEBI:15378"/>
        <dbReference type="ChEBI" id="CHEBI:57476"/>
        <dbReference type="ChEBI" id="CHEBI:57783"/>
        <dbReference type="ChEBI" id="CHEBI:58349"/>
        <dbReference type="ChEBI" id="CHEBI:537519"/>
        <dbReference type="EC" id="1.1.1.3"/>
    </reaction>
    <physiologicalReaction direction="right-to-left" evidence="3">
        <dbReference type="Rhea" id="RHEA:15763"/>
    </physiologicalReaction>
</comment>
<comment type="catalytic activity">
    <reaction evidence="3">
        <text>L-homoserine + NAD(+) = L-aspartate 4-semialdehyde + NADH + H(+)</text>
        <dbReference type="Rhea" id="RHEA:15757"/>
        <dbReference type="ChEBI" id="CHEBI:15378"/>
        <dbReference type="ChEBI" id="CHEBI:57476"/>
        <dbReference type="ChEBI" id="CHEBI:57540"/>
        <dbReference type="ChEBI" id="CHEBI:57945"/>
        <dbReference type="ChEBI" id="CHEBI:537519"/>
        <dbReference type="EC" id="1.1.1.3"/>
    </reaction>
    <physiologicalReaction direction="right-to-left" evidence="3">
        <dbReference type="Rhea" id="RHEA:15759"/>
    </physiologicalReaction>
</comment>
<comment type="cofactor">
    <cofactor evidence="3">
        <name>a metal cation</name>
        <dbReference type="ChEBI" id="CHEBI:25213"/>
    </cofactor>
    <text evidence="3">A sodium ion is seen in the structure; a metal ion may subtly affect the relative position of the nucleotide-binding region to influence enzyme activity, and could increase the stability of the enzyme.</text>
</comment>
<comment type="pathway">
    <text evidence="3">Amino-acid biosynthesis; L-methionine biosynthesis via de novo pathway; L-homoserine from L-aspartate: step 3/3.</text>
</comment>
<comment type="pathway">
    <text evidence="3">Amino-acid biosynthesis; L-threonine biosynthesis; L-threonine from L-aspartate: step 3/5.</text>
</comment>
<comment type="similarity">
    <text evidence="6">Belongs to the homoserine dehydrogenase family.</text>
</comment>
<reference key="1">
    <citation type="journal article" date="1994" name="Appl. Environ. Microbiol.">
        <title>Cloning and nucleotide sequences of the homoserine dehydrogenase genes (hom) and the threonine synthase genes (thrC) of the Gram-negative obligate methylotroph Methylobacillus glycogenes.</title>
        <authorList>
            <person name="Motoyama H."/>
            <person name="Maki K."/>
            <person name="Anazawa H."/>
            <person name="Ishino S."/>
            <person name="Teshiba S."/>
        </authorList>
    </citation>
    <scope>NUCLEOTIDE SEQUENCE [GENOMIC DNA]</scope>
    <source>
        <strain>ATCC 21276 / NCIMB 12105</strain>
    </source>
</reference>
<evidence type="ECO:0000250" key="1">
    <source>
        <dbReference type="UniProtKB" id="F9VNG5"/>
    </source>
</evidence>
<evidence type="ECO:0000250" key="2">
    <source>
        <dbReference type="UniProtKB" id="O58802"/>
    </source>
</evidence>
<evidence type="ECO:0000250" key="3">
    <source>
        <dbReference type="UniProtKB" id="P31116"/>
    </source>
</evidence>
<evidence type="ECO:0000255" key="4"/>
<evidence type="ECO:0000256" key="5">
    <source>
        <dbReference type="SAM" id="MobiDB-lite"/>
    </source>
</evidence>
<evidence type="ECO:0000305" key="6"/>
<keyword id="KW-0028">Amino-acid biosynthesis</keyword>
<keyword id="KW-0479">Metal-binding</keyword>
<keyword id="KW-0486">Methionine biosynthesis</keyword>
<keyword id="KW-0520">NAD</keyword>
<keyword id="KW-0521">NADP</keyword>
<keyword id="KW-0560">Oxidoreductase</keyword>
<keyword id="KW-0915">Sodium</keyword>
<keyword id="KW-0791">Threonine biosynthesis</keyword>
<accession>P37143</accession>
<sequence length="435" mass="48227">MKPINVGLLGIGTVGGGTYTVLTRNQEGNRAPCRPPNCHHARRDRNLELARKVTGGQIDVTDDAFAVVVRPRHRHRGRIDRRIHHRARTGYEGDRERQARVAANKALMLAWQRDFRRVAQQKGVIVAFEAAVAGGIPIIKAVAAGAGRQPSSRVLRAIINGTTNFILSEMREKGLAFADVLKEAQPRLCEATRPSTSRAWTAHKLMILAAIGFGIPMQFDKAYVEGISKLDALDIRYAEELGYRQAAWHAPSAPARGVELARAPDPDPRETPDRQCQRRHNAVLVSDACRSHLVYRPDACRRHASAVVADIVDGTRTAYHRRAPAVPHLLSSPTSSWTCRFAIGEVSSAYYLRLRAVDKPGRDGHVTRILATGSLHRCDDSEGNRRQAERRRSGRHHHPDHVTVEKNMDDAIVAIEALPAISGSVTRLRMEELSR</sequence>
<feature type="chain" id="PRO_0000066698" description="Homoserine dehydrogenase">
    <location>
        <begin position="1"/>
        <end position="435"/>
    </location>
</feature>
<feature type="region of interest" description="Disordered" evidence="5">
    <location>
        <begin position="255"/>
        <end position="274"/>
    </location>
</feature>
<feature type="region of interest" description="Disordered" evidence="5">
    <location>
        <begin position="377"/>
        <end position="402"/>
    </location>
</feature>
<feature type="compositionally biased region" description="Basic and acidic residues" evidence="5">
    <location>
        <begin position="262"/>
        <end position="274"/>
    </location>
</feature>
<feature type="compositionally biased region" description="Basic and acidic residues" evidence="5">
    <location>
        <begin position="377"/>
        <end position="391"/>
    </location>
</feature>
<feature type="active site" description="Proton donor" evidence="4">
    <location>
        <position position="204"/>
    </location>
</feature>
<feature type="binding site" evidence="2">
    <location>
        <position position="13"/>
    </location>
    <ligand>
        <name>NADPH</name>
        <dbReference type="ChEBI" id="CHEBI:57783"/>
    </ligand>
</feature>
<feature type="binding site" evidence="3">
    <location>
        <position position="14"/>
    </location>
    <ligand>
        <name>NAD(+)</name>
        <dbReference type="ChEBI" id="CHEBI:57540"/>
    </ligand>
</feature>
<feature type="binding site" evidence="1">
    <location>
        <position position="14"/>
    </location>
    <ligand>
        <name>NADP(+)</name>
        <dbReference type="ChEBI" id="CHEBI:58349"/>
    </ligand>
</feature>
<feature type="binding site" evidence="2">
    <location>
        <position position="14"/>
    </location>
    <ligand>
        <name>NADPH</name>
        <dbReference type="ChEBI" id="CHEBI:57783"/>
    </ligand>
</feature>
<feature type="binding site" evidence="1">
    <location>
        <position position="43"/>
    </location>
    <ligand>
        <name>NADP(+)</name>
        <dbReference type="ChEBI" id="CHEBI:58349"/>
    </ligand>
</feature>
<feature type="binding site" evidence="2">
    <location>
        <position position="43"/>
    </location>
    <ligand>
        <name>NADPH</name>
        <dbReference type="ChEBI" id="CHEBI:57783"/>
    </ligand>
</feature>
<feature type="binding site" evidence="1">
    <location>
        <position position="105"/>
    </location>
    <ligand>
        <name>NADP(+)</name>
        <dbReference type="ChEBI" id="CHEBI:58349"/>
    </ligand>
</feature>
<feature type="binding site" evidence="2">
    <location>
        <position position="105"/>
    </location>
    <ligand>
        <name>NADPH</name>
        <dbReference type="ChEBI" id="CHEBI:57783"/>
    </ligand>
</feature>
<feature type="binding site" evidence="3">
    <location>
        <position position="129"/>
    </location>
    <ligand>
        <name>Na(+)</name>
        <dbReference type="ChEBI" id="CHEBI:29101"/>
    </ligand>
</feature>
<feature type="binding site" evidence="3">
    <location>
        <position position="132"/>
    </location>
    <ligand>
        <name>Na(+)</name>
        <dbReference type="ChEBI" id="CHEBI:29101"/>
    </ligand>
</feature>
<feature type="binding site" evidence="3">
    <location>
        <position position="134"/>
    </location>
    <ligand>
        <name>Na(+)</name>
        <dbReference type="ChEBI" id="CHEBI:29101"/>
    </ligand>
</feature>
<feature type="binding site" evidence="3">
    <location>
        <position position="136"/>
    </location>
    <ligand>
        <name>Na(+)</name>
        <dbReference type="ChEBI" id="CHEBI:29101"/>
    </ligand>
</feature>
<name>DHOM_METGL</name>
<protein>
    <recommendedName>
        <fullName>Homoserine dehydrogenase</fullName>
        <shortName>HDH</shortName>
        <shortName>HSD</shortName>
        <ecNumber evidence="3">1.1.1.3</ecNumber>
    </recommendedName>
</protein>